<evidence type="ECO:0000250" key="1"/>
<evidence type="ECO:0000255" key="2">
    <source>
        <dbReference type="PROSITE-ProRule" id="PRU00037"/>
    </source>
</evidence>
<evidence type="ECO:0000256" key="3">
    <source>
        <dbReference type="SAM" id="MobiDB-lite"/>
    </source>
</evidence>
<evidence type="ECO:0000269" key="4">
    <source>
    </source>
</evidence>
<feature type="chain" id="PRO_0000408531" description="BTB/POZ domain-containing protein At5g60050">
    <location>
        <begin position="1"/>
        <end position="499"/>
    </location>
</feature>
<feature type="domain" description="BTB" evidence="2">
    <location>
        <begin position="99"/>
        <end position="172"/>
    </location>
</feature>
<feature type="region of interest" description="Disordered" evidence="3">
    <location>
        <begin position="18"/>
        <end position="57"/>
    </location>
</feature>
<feature type="compositionally biased region" description="Low complexity" evidence="3">
    <location>
        <begin position="18"/>
        <end position="30"/>
    </location>
</feature>
<feature type="compositionally biased region" description="Pro residues" evidence="3">
    <location>
        <begin position="38"/>
        <end position="49"/>
    </location>
</feature>
<keyword id="KW-1185">Reference proteome</keyword>
<keyword id="KW-0833">Ubl conjugation pathway</keyword>
<dbReference type="EMBL" id="AB019231">
    <property type="protein sequence ID" value="BAA96934.1"/>
    <property type="molecule type" value="Genomic_DNA"/>
</dbReference>
<dbReference type="EMBL" id="CP002688">
    <property type="protein sequence ID" value="AED97271.1"/>
    <property type="molecule type" value="Genomic_DNA"/>
</dbReference>
<dbReference type="EMBL" id="AK117505">
    <property type="protein sequence ID" value="BAC42168.1"/>
    <property type="molecule type" value="mRNA"/>
</dbReference>
<dbReference type="EMBL" id="BT006037">
    <property type="protein sequence ID" value="AAP04024.1"/>
    <property type="molecule type" value="mRNA"/>
</dbReference>
<dbReference type="RefSeq" id="NP_200813.1">
    <property type="nucleotide sequence ID" value="NM_125398.2"/>
</dbReference>
<dbReference type="SMR" id="Q9LVG9"/>
<dbReference type="BioGRID" id="21371">
    <property type="interactions" value="1"/>
</dbReference>
<dbReference type="FunCoup" id="Q9LVG9">
    <property type="interactions" value="342"/>
</dbReference>
<dbReference type="PaxDb" id="3702-AT5G60050.1"/>
<dbReference type="ProteomicsDB" id="243116"/>
<dbReference type="EnsemblPlants" id="AT5G60050.1">
    <property type="protein sequence ID" value="AT5G60050.1"/>
    <property type="gene ID" value="AT5G60050"/>
</dbReference>
<dbReference type="GeneID" id="836127"/>
<dbReference type="Gramene" id="AT5G60050.1">
    <property type="protein sequence ID" value="AT5G60050.1"/>
    <property type="gene ID" value="AT5G60050"/>
</dbReference>
<dbReference type="KEGG" id="ath:AT5G60050"/>
<dbReference type="Araport" id="AT5G60050"/>
<dbReference type="TAIR" id="AT5G60050"/>
<dbReference type="eggNOG" id="ENOG502QPNN">
    <property type="taxonomic scope" value="Eukaryota"/>
</dbReference>
<dbReference type="HOGENOM" id="CLU_025834_0_0_1"/>
<dbReference type="InParanoid" id="Q9LVG9"/>
<dbReference type="OMA" id="SHMVEIS"/>
<dbReference type="PhylomeDB" id="Q9LVG9"/>
<dbReference type="UniPathway" id="UPA00143"/>
<dbReference type="PRO" id="PR:Q9LVG9"/>
<dbReference type="Proteomes" id="UP000006548">
    <property type="component" value="Chromosome 5"/>
</dbReference>
<dbReference type="ExpressionAtlas" id="Q9LVG9">
    <property type="expression patterns" value="baseline and differential"/>
</dbReference>
<dbReference type="GO" id="GO:0016567">
    <property type="term" value="P:protein ubiquitination"/>
    <property type="evidence" value="ECO:0007669"/>
    <property type="project" value="UniProtKB-UniPathway"/>
</dbReference>
<dbReference type="InterPro" id="IPR000210">
    <property type="entry name" value="BTB/POZ_dom"/>
</dbReference>
<dbReference type="InterPro" id="IPR038920">
    <property type="entry name" value="BTB/POZ_dom_prot"/>
</dbReference>
<dbReference type="PANTHER" id="PTHR31060:SF32">
    <property type="entry name" value="BTB_POZ DOMAIN PLANT PROTEIN"/>
    <property type="match status" value="1"/>
</dbReference>
<dbReference type="PANTHER" id="PTHR31060">
    <property type="entry name" value="OSJNBA0011J08.25 PROTEIN-RELATED"/>
    <property type="match status" value="1"/>
</dbReference>
<dbReference type="PROSITE" id="PS50097">
    <property type="entry name" value="BTB"/>
    <property type="match status" value="1"/>
</dbReference>
<name>Y5600_ARATH</name>
<accession>Q9LVG9</accession>
<proteinExistence type="evidence at transcript level"/>
<reference key="1">
    <citation type="journal article" date="2000" name="DNA Res.">
        <title>Structural analysis of Arabidopsis thaliana chromosome 5. X. Sequence features of the regions of 3,076,755 bp covered by sixty P1 and TAC clones.</title>
        <authorList>
            <person name="Sato S."/>
            <person name="Nakamura Y."/>
            <person name="Kaneko T."/>
            <person name="Katoh T."/>
            <person name="Asamizu E."/>
            <person name="Kotani H."/>
            <person name="Tabata S."/>
        </authorList>
    </citation>
    <scope>NUCLEOTIDE SEQUENCE [LARGE SCALE GENOMIC DNA]</scope>
    <source>
        <strain>cv. Columbia</strain>
    </source>
</reference>
<reference key="2">
    <citation type="journal article" date="2017" name="Plant J.">
        <title>Araport11: a complete reannotation of the Arabidopsis thaliana reference genome.</title>
        <authorList>
            <person name="Cheng C.Y."/>
            <person name="Krishnakumar V."/>
            <person name="Chan A.P."/>
            <person name="Thibaud-Nissen F."/>
            <person name="Schobel S."/>
            <person name="Town C.D."/>
        </authorList>
    </citation>
    <scope>GENOME REANNOTATION</scope>
    <source>
        <strain>cv. Columbia</strain>
    </source>
</reference>
<reference key="3">
    <citation type="journal article" date="2002" name="Science">
        <title>Functional annotation of a full-length Arabidopsis cDNA collection.</title>
        <authorList>
            <person name="Seki M."/>
            <person name="Narusaka M."/>
            <person name="Kamiya A."/>
            <person name="Ishida J."/>
            <person name="Satou M."/>
            <person name="Sakurai T."/>
            <person name="Nakajima M."/>
            <person name="Enju A."/>
            <person name="Akiyama K."/>
            <person name="Oono Y."/>
            <person name="Muramatsu M."/>
            <person name="Hayashizaki Y."/>
            <person name="Kawai J."/>
            <person name="Carninci P."/>
            <person name="Itoh M."/>
            <person name="Ishii Y."/>
            <person name="Arakawa T."/>
            <person name="Shibata K."/>
            <person name="Shinagawa A."/>
            <person name="Shinozaki K."/>
        </authorList>
    </citation>
    <scope>NUCLEOTIDE SEQUENCE [LARGE SCALE MRNA]</scope>
    <source>
        <strain>cv. Columbia</strain>
    </source>
</reference>
<reference key="4">
    <citation type="journal article" date="2003" name="Science">
        <title>Empirical analysis of transcriptional activity in the Arabidopsis genome.</title>
        <authorList>
            <person name="Yamada K."/>
            <person name="Lim J."/>
            <person name="Dale J.M."/>
            <person name="Chen H."/>
            <person name="Shinn P."/>
            <person name="Palm C.J."/>
            <person name="Southwick A.M."/>
            <person name="Wu H.C."/>
            <person name="Kim C.J."/>
            <person name="Nguyen M."/>
            <person name="Pham P.K."/>
            <person name="Cheuk R.F."/>
            <person name="Karlin-Newmann G."/>
            <person name="Liu S.X."/>
            <person name="Lam B."/>
            <person name="Sakano H."/>
            <person name="Wu T."/>
            <person name="Yu G."/>
            <person name="Miranda M."/>
            <person name="Quach H.L."/>
            <person name="Tripp M."/>
            <person name="Chang C.H."/>
            <person name="Lee J.M."/>
            <person name="Toriumi M.J."/>
            <person name="Chan M.M."/>
            <person name="Tang C.C."/>
            <person name="Onodera C.S."/>
            <person name="Deng J.M."/>
            <person name="Akiyama K."/>
            <person name="Ansari Y."/>
            <person name="Arakawa T."/>
            <person name="Banh J."/>
            <person name="Banno F."/>
            <person name="Bowser L."/>
            <person name="Brooks S.Y."/>
            <person name="Carninci P."/>
            <person name="Chao Q."/>
            <person name="Choy N."/>
            <person name="Enju A."/>
            <person name="Goldsmith A.D."/>
            <person name="Gurjal M."/>
            <person name="Hansen N.F."/>
            <person name="Hayashizaki Y."/>
            <person name="Johnson-Hopson C."/>
            <person name="Hsuan V.W."/>
            <person name="Iida K."/>
            <person name="Karnes M."/>
            <person name="Khan S."/>
            <person name="Koesema E."/>
            <person name="Ishida J."/>
            <person name="Jiang P.X."/>
            <person name="Jones T."/>
            <person name="Kawai J."/>
            <person name="Kamiya A."/>
            <person name="Meyers C."/>
            <person name="Nakajima M."/>
            <person name="Narusaka M."/>
            <person name="Seki M."/>
            <person name="Sakurai T."/>
            <person name="Satou M."/>
            <person name="Tamse R."/>
            <person name="Vaysberg M."/>
            <person name="Wallender E.K."/>
            <person name="Wong C."/>
            <person name="Yamamura Y."/>
            <person name="Yuan S."/>
            <person name="Shinozaki K."/>
            <person name="Davis R.W."/>
            <person name="Theologis A."/>
            <person name="Ecker J.R."/>
        </authorList>
    </citation>
    <scope>NUCLEOTIDE SEQUENCE [LARGE SCALE MRNA]</scope>
    <source>
        <strain>cv. Columbia</strain>
    </source>
</reference>
<reference key="5">
    <citation type="journal article" date="2005" name="J. Biol. Chem.">
        <title>Cullins 3a and 3b assemble with members of the broad complex/tramtrack/bric-a-brac (BTB) protein family to form essential ubiquitin-protein ligases (E3s) in Arabidopsis.</title>
        <authorList>
            <person name="Gingerich D.J."/>
            <person name="Gagne J.M."/>
            <person name="Salter D.W."/>
            <person name="Hellmann H."/>
            <person name="Estelle M."/>
            <person name="Ma L."/>
            <person name="Vierstra R.D."/>
        </authorList>
    </citation>
    <scope>DOMAIN BTB</scope>
</reference>
<gene>
    <name type="ordered locus">At5g60050</name>
    <name type="ORF">MGO3.3</name>
</gene>
<comment type="function">
    <text evidence="1">May act as a substrate-specific adapter of an E3 ubiquitin-protein ligase complex (CUL3-RBX1-BTB) which mediates the ubiquitination and subsequent proteasomal degradation of target proteins.</text>
</comment>
<comment type="pathway">
    <text>Protein modification; protein ubiquitination.</text>
</comment>
<comment type="domain">
    <text evidence="4">The BTB/POZ domain mediates the interaction with some component of ubiquitin ligase complexes.</text>
</comment>
<protein>
    <recommendedName>
        <fullName>BTB/POZ domain-containing protein At5g60050</fullName>
    </recommendedName>
</protein>
<sequence length="499" mass="56939">MASREVSTMIKQGFIADPSLSFSPSRISSPIKLSTASPPLPPPPPPPPNESTLSNPTLFDMMSDEHNRELPRRKSHARVAQILTEFKNGVVYGHSLGPGDVKLTVVGKDGYRVTMDVHRKVLSEKSRFFMEKMNSRREKGVSHMVEISECDDLEIYVETVVLMYSDDLKKKLIGENVIKILALLKVSAAISFDEGVMSCLEHLEAVPWSEDEEETVVTCLEELHLPDDSVTLILQRVSSQPSTSSTRTRTDDIFSKLLTGVLQAKDDKARREMKVLIFKLVREEADYDVSRDTLYGLCHRCLTSLVLCLSEVTTQMNDPGKDRGALMGEIAREADNMLWMVDILIEKKLCSEFVKLWADQKELANLHSKIPTMYRHEISKITAQICVGIGKGRILVNRETRFAVLNTWLEALYDDFGWMRRLSSRSLDRKLVEDGLSQTILTLSLRQQQVILMKWFDRFLSKGDDCPNVQRAFEVWWRRAFIRQVLTEPDEPRLQITLY</sequence>
<organism>
    <name type="scientific">Arabidopsis thaliana</name>
    <name type="common">Mouse-ear cress</name>
    <dbReference type="NCBI Taxonomy" id="3702"/>
    <lineage>
        <taxon>Eukaryota</taxon>
        <taxon>Viridiplantae</taxon>
        <taxon>Streptophyta</taxon>
        <taxon>Embryophyta</taxon>
        <taxon>Tracheophyta</taxon>
        <taxon>Spermatophyta</taxon>
        <taxon>Magnoliopsida</taxon>
        <taxon>eudicotyledons</taxon>
        <taxon>Gunneridae</taxon>
        <taxon>Pentapetalae</taxon>
        <taxon>rosids</taxon>
        <taxon>malvids</taxon>
        <taxon>Brassicales</taxon>
        <taxon>Brassicaceae</taxon>
        <taxon>Camelineae</taxon>
        <taxon>Arabidopsis</taxon>
    </lineage>
</organism>